<keyword id="KW-0472">Membrane</keyword>
<keyword id="KW-1185">Reference proteome</keyword>
<keyword id="KW-0677">Repeat</keyword>
<keyword id="KW-0812">Transmembrane</keyword>
<keyword id="KW-1133">Transmembrane helix</keyword>
<dbReference type="EMBL" id="AP001120">
    <property type="status" value="NOT_ANNOTATED_CDS"/>
    <property type="molecule type" value="Genomic_DNA"/>
</dbReference>
<dbReference type="CCDS" id="CCDS82241.1"/>
<dbReference type="RefSeq" id="NP_001269229.1">
    <property type="nucleotide sequence ID" value="NM_001282300.2"/>
</dbReference>
<dbReference type="SMR" id="P0C7Q5"/>
<dbReference type="STRING" id="9606.ENSP00000490812"/>
<dbReference type="TCDB" id="2.A.7.28.4">
    <property type="family name" value="the drug/metabolite transporter (dmt) superfamily"/>
</dbReference>
<dbReference type="GlyGen" id="P0C7Q5">
    <property type="glycosylation" value="1 site"/>
</dbReference>
<dbReference type="BioMuta" id="SLC35G4"/>
<dbReference type="DMDM" id="193806689"/>
<dbReference type="PaxDb" id="9606-ENSP00000485584"/>
<dbReference type="ProteomicsDB" id="52360"/>
<dbReference type="Antibodypedia" id="79249">
    <property type="antibodies" value="6 antibodies from 3 providers"/>
</dbReference>
<dbReference type="DNASU" id="646000"/>
<dbReference type="Ensembl" id="ENST00000588001.2">
    <property type="protein sequence ID" value="ENSP00000490812.1"/>
    <property type="gene ID" value="ENSG00000236396.8"/>
</dbReference>
<dbReference type="GeneID" id="646000"/>
<dbReference type="KEGG" id="hsa:646000"/>
<dbReference type="MANE-Select" id="ENST00000588001.2">
    <property type="protein sequence ID" value="ENSP00000490812.1"/>
    <property type="RefSeq nucleotide sequence ID" value="NM_001282300.2"/>
    <property type="RefSeq protein sequence ID" value="NP_001269229.1"/>
</dbReference>
<dbReference type="AGR" id="HGNC:31043"/>
<dbReference type="CTD" id="646000"/>
<dbReference type="GeneCards" id="SLC35G4"/>
<dbReference type="HGNC" id="HGNC:31043">
    <property type="gene designation" value="SLC35G4"/>
</dbReference>
<dbReference type="HPA" id="ENSG00000236396">
    <property type="expression patterns" value="Not detected"/>
</dbReference>
<dbReference type="neXtProt" id="NX_P0C7Q5"/>
<dbReference type="OpenTargets" id="ENSG00000236396"/>
<dbReference type="PharmGKB" id="PA134875980"/>
<dbReference type="VEuPathDB" id="HostDB:ENSG00000236396"/>
<dbReference type="eggNOG" id="ENOG502RCFC">
    <property type="taxonomic scope" value="Eukaryota"/>
</dbReference>
<dbReference type="GeneTree" id="ENSGT00940000153249"/>
<dbReference type="InParanoid" id="P0C7Q5"/>
<dbReference type="OMA" id="SIFIHAI"/>
<dbReference type="OrthoDB" id="306876at2759"/>
<dbReference type="PAN-GO" id="P0C7Q5">
    <property type="GO annotations" value="1 GO annotation based on evolutionary models"/>
</dbReference>
<dbReference type="PhylomeDB" id="P0C7Q5"/>
<dbReference type="SignaLink" id="P0C7Q5"/>
<dbReference type="BioGRID-ORCS" id="646000">
    <property type="hits" value="5 hits in 147 CRISPR screens"/>
</dbReference>
<dbReference type="GenomeRNAi" id="646000"/>
<dbReference type="Pharos" id="P0C7Q5">
    <property type="development level" value="Tdark"/>
</dbReference>
<dbReference type="PRO" id="PR:P0C7Q5"/>
<dbReference type="Proteomes" id="UP000005640">
    <property type="component" value="Chromosome 18"/>
</dbReference>
<dbReference type="RNAct" id="P0C7Q5">
    <property type="molecule type" value="protein"/>
</dbReference>
<dbReference type="GO" id="GO:0016020">
    <property type="term" value="C:membrane"/>
    <property type="evidence" value="ECO:0000318"/>
    <property type="project" value="GO_Central"/>
</dbReference>
<dbReference type="InterPro" id="IPR000620">
    <property type="entry name" value="EamA_dom"/>
</dbReference>
<dbReference type="PANTHER" id="PTHR22911">
    <property type="entry name" value="ACYL-MALONYL CONDENSING ENZYME-RELATED"/>
    <property type="match status" value="1"/>
</dbReference>
<dbReference type="PANTHER" id="PTHR22911:SF32">
    <property type="entry name" value="SOLUTE CARRIER FAMILY 35 MEMBER G5-RELATED"/>
    <property type="match status" value="1"/>
</dbReference>
<dbReference type="Pfam" id="PF00892">
    <property type="entry name" value="EamA"/>
    <property type="match status" value="2"/>
</dbReference>
<dbReference type="SUPFAM" id="SSF103481">
    <property type="entry name" value="Multidrug resistance efflux transporter EmrE"/>
    <property type="match status" value="2"/>
</dbReference>
<name>S35G4_HUMAN</name>
<sequence length="338" mass="35378">MAGSHPYFNLPDSTHPSPPSTPPSLHWHQRCQPSDATNGLLVALLGGGLPAGFVGPLSRMAYQASNLPSLELVICRCLFHLPIALLLKLRGDPLLGPPDIRGRTCFCALLNVLNIGCAYSAVQVVPTGNAATVRKHSSTVCSAILTLCLESQVLSGYDWCGLLGSILGLIIIVGPGLWTLQEGTTGVYTGLGYVQAFLGGLALSLGLLVYRSLHFPSCLPTVAFLSGLVGLLGSVPGLFVLQSPVLPSDLLSWSCVGAVGILTLVSFTCVGYAVTKAHPALVCAVLHSEVVMALILQYFMLHETVAPSDIMGAGVVLGSIAIITARNLICERTGKVEE</sequence>
<accession>P0C7Q5</accession>
<comment type="subcellular location">
    <subcellularLocation>
        <location evidence="3">Membrane</location>
        <topology evidence="3">Multi-pass membrane protein</topology>
    </subcellularLocation>
</comment>
<comment type="similarity">
    <text evidence="3">Belongs to the SLC35G solute transporter family.</text>
</comment>
<comment type="caution">
    <text evidence="3 4">A previous study suggested that the intronless gene encoding this protein arose by SVA-mediated retrotransposition of the SLC35G6 gene in the primate lineage, with no evidence for transcription. However, it is also possible that the gene arose by the duplication of a prior retroinsertion event as opposed to a retrotransposition event itself and could be protein-coding.</text>
</comment>
<organism>
    <name type="scientific">Homo sapiens</name>
    <name type="common">Human</name>
    <dbReference type="NCBI Taxonomy" id="9606"/>
    <lineage>
        <taxon>Eukaryota</taxon>
        <taxon>Metazoa</taxon>
        <taxon>Chordata</taxon>
        <taxon>Craniata</taxon>
        <taxon>Vertebrata</taxon>
        <taxon>Euteleostomi</taxon>
        <taxon>Mammalia</taxon>
        <taxon>Eutheria</taxon>
        <taxon>Euarchontoglires</taxon>
        <taxon>Primates</taxon>
        <taxon>Haplorrhini</taxon>
        <taxon>Catarrhini</taxon>
        <taxon>Hominidae</taxon>
        <taxon>Homo</taxon>
    </lineage>
</organism>
<reference key="1">
    <citation type="journal article" date="2005" name="Nature">
        <title>DNA sequence and analysis of human chromosome 18.</title>
        <authorList>
            <person name="Nusbaum C."/>
            <person name="Zody M.C."/>
            <person name="Borowsky M.L."/>
            <person name="Kamal M."/>
            <person name="Kodira C.D."/>
            <person name="Taylor T.D."/>
            <person name="Whittaker C.A."/>
            <person name="Chang J.L."/>
            <person name="Cuomo C.A."/>
            <person name="Dewar K."/>
            <person name="FitzGerald M.G."/>
            <person name="Yang X."/>
            <person name="Abouelleil A."/>
            <person name="Allen N.R."/>
            <person name="Anderson S."/>
            <person name="Bloom T."/>
            <person name="Bugalter B."/>
            <person name="Butler J."/>
            <person name="Cook A."/>
            <person name="DeCaprio D."/>
            <person name="Engels R."/>
            <person name="Garber M."/>
            <person name="Gnirke A."/>
            <person name="Hafez N."/>
            <person name="Hall J.L."/>
            <person name="Norman C.H."/>
            <person name="Itoh T."/>
            <person name="Jaffe D.B."/>
            <person name="Kuroki Y."/>
            <person name="Lehoczky J."/>
            <person name="Lui A."/>
            <person name="Macdonald P."/>
            <person name="Mauceli E."/>
            <person name="Mikkelsen T.S."/>
            <person name="Naylor J.W."/>
            <person name="Nicol R."/>
            <person name="Nguyen C."/>
            <person name="Noguchi H."/>
            <person name="O'Leary S.B."/>
            <person name="Piqani B."/>
            <person name="Smith C.L."/>
            <person name="Talamas J.A."/>
            <person name="Topham K."/>
            <person name="Totoki Y."/>
            <person name="Toyoda A."/>
            <person name="Wain H.M."/>
            <person name="Young S.K."/>
            <person name="Zeng Q."/>
            <person name="Zimmer A.R."/>
            <person name="Fujiyama A."/>
            <person name="Hattori M."/>
            <person name="Birren B.W."/>
            <person name="Sakaki Y."/>
            <person name="Lander E.S."/>
        </authorList>
    </citation>
    <scope>NUCLEOTIDE SEQUENCE [LARGE SCALE GENOMIC DNA]</scope>
</reference>
<reference key="2">
    <citation type="journal article" date="2006" name="Proc. Natl. Acad. Sci. U.S.A.">
        <title>Emergence of primate genes by retrotransposon-mediated sequence transduction.</title>
        <authorList>
            <person name="Xing J."/>
            <person name="Wang H."/>
            <person name="Belancio V.P."/>
            <person name="Cordaux R."/>
            <person name="Deininger P.L."/>
            <person name="Batzer M.A."/>
        </authorList>
    </citation>
    <scope>GENE EVOLUTION</scope>
</reference>
<evidence type="ECO:0000255" key="1"/>
<evidence type="ECO:0000256" key="2">
    <source>
        <dbReference type="SAM" id="MobiDB-lite"/>
    </source>
</evidence>
<evidence type="ECO:0000305" key="3"/>
<evidence type="ECO:0000305" key="4">
    <source>
    </source>
</evidence>
<feature type="chain" id="PRO_0000342675" description="Solute carrier family 35 member G4">
    <location>
        <begin position="1"/>
        <end position="338"/>
    </location>
</feature>
<feature type="transmembrane region" description="Helical" evidence="1">
    <location>
        <begin position="37"/>
        <end position="57"/>
    </location>
</feature>
<feature type="transmembrane region" description="Helical" evidence="1">
    <location>
        <begin position="160"/>
        <end position="180"/>
    </location>
</feature>
<feature type="transmembrane region" description="Helical" evidence="1">
    <location>
        <begin position="190"/>
        <end position="210"/>
    </location>
</feature>
<feature type="transmembrane region" description="Helical" evidence="1">
    <location>
        <begin position="221"/>
        <end position="241"/>
    </location>
</feature>
<feature type="transmembrane region" description="Helical" evidence="1">
    <location>
        <begin position="250"/>
        <end position="270"/>
    </location>
</feature>
<feature type="transmembrane region" description="Helical" evidence="1">
    <location>
        <begin position="281"/>
        <end position="301"/>
    </location>
</feature>
<feature type="transmembrane region" description="Helical" evidence="1">
    <location>
        <begin position="305"/>
        <end position="325"/>
    </location>
</feature>
<feature type="domain" description="EamA 1">
    <location>
        <begin position="49"/>
        <end position="174"/>
    </location>
</feature>
<feature type="domain" description="EamA 2">
    <location>
        <begin position="272"/>
        <end position="325"/>
    </location>
</feature>
<feature type="region of interest" description="Disordered" evidence="2">
    <location>
        <begin position="1"/>
        <end position="29"/>
    </location>
</feature>
<feature type="sequence variant" id="VAR_061556" description="In dbSNP:rs8087447.">
    <original>T</original>
    <variation>A</variation>
    <location>
        <position position="104"/>
    </location>
</feature>
<proteinExistence type="inferred from homology"/>
<gene>
    <name type="primary">SLC35G4</name>
    <name type="synonym">AMAC1L1</name>
    <name type="synonym">SLC35G4P</name>
</gene>
<protein>
    <recommendedName>
        <fullName>Solute carrier family 35 member G4</fullName>
    </recommendedName>
    <alternativeName>
        <fullName>Acyl-malonyl-condensing enzyme 1-like protein 1</fullName>
    </alternativeName>
</protein>